<dbReference type="EC" id="5.4.2.11" evidence="1"/>
<dbReference type="EMBL" id="CU928145">
    <property type="protein sequence ID" value="CAU96602.1"/>
    <property type="molecule type" value="Genomic_DNA"/>
</dbReference>
<dbReference type="RefSeq" id="WP_001295305.1">
    <property type="nucleotide sequence ID" value="NZ_CP028304.1"/>
</dbReference>
<dbReference type="SMR" id="B7LAF6"/>
<dbReference type="GeneID" id="93776726"/>
<dbReference type="KEGG" id="eck:EC55989_0734"/>
<dbReference type="HOGENOM" id="CLU_033323_1_1_6"/>
<dbReference type="UniPathway" id="UPA00109">
    <property type="reaction ID" value="UER00186"/>
</dbReference>
<dbReference type="Proteomes" id="UP000000746">
    <property type="component" value="Chromosome"/>
</dbReference>
<dbReference type="GO" id="GO:0004619">
    <property type="term" value="F:phosphoglycerate mutase activity"/>
    <property type="evidence" value="ECO:0007669"/>
    <property type="project" value="UniProtKB-EC"/>
</dbReference>
<dbReference type="GO" id="GO:0006094">
    <property type="term" value="P:gluconeogenesis"/>
    <property type="evidence" value="ECO:0007669"/>
    <property type="project" value="UniProtKB-UniRule"/>
</dbReference>
<dbReference type="GO" id="GO:0006096">
    <property type="term" value="P:glycolytic process"/>
    <property type="evidence" value="ECO:0007669"/>
    <property type="project" value="UniProtKB-UniRule"/>
</dbReference>
<dbReference type="CDD" id="cd07067">
    <property type="entry name" value="HP_PGM_like"/>
    <property type="match status" value="1"/>
</dbReference>
<dbReference type="FunFam" id="3.40.50.1240:FF:000003">
    <property type="entry name" value="2,3-bisphosphoglycerate-dependent phosphoglycerate mutase"/>
    <property type="match status" value="1"/>
</dbReference>
<dbReference type="Gene3D" id="3.40.50.1240">
    <property type="entry name" value="Phosphoglycerate mutase-like"/>
    <property type="match status" value="1"/>
</dbReference>
<dbReference type="HAMAP" id="MF_01039">
    <property type="entry name" value="PGAM_GpmA"/>
    <property type="match status" value="1"/>
</dbReference>
<dbReference type="InterPro" id="IPR013078">
    <property type="entry name" value="His_Pase_superF_clade-1"/>
</dbReference>
<dbReference type="InterPro" id="IPR029033">
    <property type="entry name" value="His_PPase_superfam"/>
</dbReference>
<dbReference type="InterPro" id="IPR001345">
    <property type="entry name" value="PG/BPGM_mutase_AS"/>
</dbReference>
<dbReference type="InterPro" id="IPR005952">
    <property type="entry name" value="Phosphogly_mut1"/>
</dbReference>
<dbReference type="NCBIfam" id="TIGR01258">
    <property type="entry name" value="pgm_1"/>
    <property type="match status" value="1"/>
</dbReference>
<dbReference type="NCBIfam" id="NF010713">
    <property type="entry name" value="PRK14115.1"/>
    <property type="match status" value="1"/>
</dbReference>
<dbReference type="PANTHER" id="PTHR11931">
    <property type="entry name" value="PHOSPHOGLYCERATE MUTASE"/>
    <property type="match status" value="1"/>
</dbReference>
<dbReference type="Pfam" id="PF00300">
    <property type="entry name" value="His_Phos_1"/>
    <property type="match status" value="1"/>
</dbReference>
<dbReference type="PIRSF" id="PIRSF000709">
    <property type="entry name" value="6PFK_2-Ptase"/>
    <property type="match status" value="1"/>
</dbReference>
<dbReference type="SMART" id="SM00855">
    <property type="entry name" value="PGAM"/>
    <property type="match status" value="1"/>
</dbReference>
<dbReference type="SUPFAM" id="SSF53254">
    <property type="entry name" value="Phosphoglycerate mutase-like"/>
    <property type="match status" value="1"/>
</dbReference>
<dbReference type="PROSITE" id="PS00175">
    <property type="entry name" value="PG_MUTASE"/>
    <property type="match status" value="1"/>
</dbReference>
<sequence>MAVTKLVLVRHGESQWNKENRFTGWYDVDLSEKGVSEAKAAGKLLKEEGYSFDFAYTSVLKRAIHTLWNVLDELDQAWLPVEKSWKLNERHYGALQGLNKAETAEKYGDEQVKQWRRGFAVTPPELTKDDERYPGHDPRYAKLSEKELPLTESLALTIDRVIPYWNETILPRMKSGERVIIAAHGNSLRALVKYLDNMSEEEILELNIPTGVPLVYEFDENFKPLKRYYLGNADEIAAKAAAVANQGKAK</sequence>
<accession>B7LAF6</accession>
<feature type="chain" id="PRO_1000149512" description="2,3-bisphosphoglycerate-dependent phosphoglycerate mutase">
    <location>
        <begin position="1"/>
        <end position="250"/>
    </location>
</feature>
<feature type="active site" description="Tele-phosphohistidine intermediate" evidence="1">
    <location>
        <position position="11"/>
    </location>
</feature>
<feature type="active site" description="Proton donor/acceptor" evidence="1">
    <location>
        <position position="89"/>
    </location>
</feature>
<feature type="binding site" evidence="1">
    <location>
        <begin position="10"/>
        <end position="17"/>
    </location>
    <ligand>
        <name>substrate</name>
    </ligand>
</feature>
<feature type="binding site" evidence="1">
    <location>
        <begin position="23"/>
        <end position="24"/>
    </location>
    <ligand>
        <name>substrate</name>
    </ligand>
</feature>
<feature type="binding site" evidence="1">
    <location>
        <position position="62"/>
    </location>
    <ligand>
        <name>substrate</name>
    </ligand>
</feature>
<feature type="binding site" evidence="1">
    <location>
        <begin position="89"/>
        <end position="92"/>
    </location>
    <ligand>
        <name>substrate</name>
    </ligand>
</feature>
<feature type="binding site" evidence="1">
    <location>
        <position position="100"/>
    </location>
    <ligand>
        <name>substrate</name>
    </ligand>
</feature>
<feature type="binding site" evidence="1">
    <location>
        <begin position="116"/>
        <end position="117"/>
    </location>
    <ligand>
        <name>substrate</name>
    </ligand>
</feature>
<feature type="binding site" evidence="1">
    <location>
        <begin position="185"/>
        <end position="186"/>
    </location>
    <ligand>
        <name>substrate</name>
    </ligand>
</feature>
<feature type="site" description="Transition state stabilizer" evidence="1">
    <location>
        <position position="184"/>
    </location>
</feature>
<comment type="function">
    <text evidence="1">Catalyzes the interconversion of 2-phosphoglycerate and 3-phosphoglycerate.</text>
</comment>
<comment type="catalytic activity">
    <reaction evidence="1">
        <text>(2R)-2-phosphoglycerate = (2R)-3-phosphoglycerate</text>
        <dbReference type="Rhea" id="RHEA:15901"/>
        <dbReference type="ChEBI" id="CHEBI:58272"/>
        <dbReference type="ChEBI" id="CHEBI:58289"/>
        <dbReference type="EC" id="5.4.2.11"/>
    </reaction>
</comment>
<comment type="pathway">
    <text evidence="1">Carbohydrate degradation; glycolysis; pyruvate from D-glyceraldehyde 3-phosphate: step 3/5.</text>
</comment>
<comment type="subunit">
    <text evidence="1">Homodimer.</text>
</comment>
<comment type="similarity">
    <text evidence="1">Belongs to the phosphoglycerate mutase family. BPG-dependent PGAM subfamily.</text>
</comment>
<evidence type="ECO:0000255" key="1">
    <source>
        <dbReference type="HAMAP-Rule" id="MF_01039"/>
    </source>
</evidence>
<gene>
    <name evidence="1" type="primary">gpmA</name>
    <name type="ordered locus">EC55989_0734</name>
</gene>
<protein>
    <recommendedName>
        <fullName evidence="1">2,3-bisphosphoglycerate-dependent phosphoglycerate mutase</fullName>
        <shortName evidence="1">BPG-dependent PGAM</shortName>
        <shortName evidence="1">PGAM</shortName>
        <shortName evidence="1">Phosphoglyceromutase</shortName>
        <shortName evidence="1">dPGM</shortName>
        <ecNumber evidence="1">5.4.2.11</ecNumber>
    </recommendedName>
</protein>
<name>GPMA_ECO55</name>
<keyword id="KW-0312">Gluconeogenesis</keyword>
<keyword id="KW-0324">Glycolysis</keyword>
<keyword id="KW-0413">Isomerase</keyword>
<keyword id="KW-1185">Reference proteome</keyword>
<proteinExistence type="inferred from homology"/>
<reference key="1">
    <citation type="journal article" date="2009" name="PLoS Genet.">
        <title>Organised genome dynamics in the Escherichia coli species results in highly diverse adaptive paths.</title>
        <authorList>
            <person name="Touchon M."/>
            <person name="Hoede C."/>
            <person name="Tenaillon O."/>
            <person name="Barbe V."/>
            <person name="Baeriswyl S."/>
            <person name="Bidet P."/>
            <person name="Bingen E."/>
            <person name="Bonacorsi S."/>
            <person name="Bouchier C."/>
            <person name="Bouvet O."/>
            <person name="Calteau A."/>
            <person name="Chiapello H."/>
            <person name="Clermont O."/>
            <person name="Cruveiller S."/>
            <person name="Danchin A."/>
            <person name="Diard M."/>
            <person name="Dossat C."/>
            <person name="Karoui M.E."/>
            <person name="Frapy E."/>
            <person name="Garry L."/>
            <person name="Ghigo J.M."/>
            <person name="Gilles A.M."/>
            <person name="Johnson J."/>
            <person name="Le Bouguenec C."/>
            <person name="Lescat M."/>
            <person name="Mangenot S."/>
            <person name="Martinez-Jehanne V."/>
            <person name="Matic I."/>
            <person name="Nassif X."/>
            <person name="Oztas S."/>
            <person name="Petit M.A."/>
            <person name="Pichon C."/>
            <person name="Rouy Z."/>
            <person name="Ruf C.S."/>
            <person name="Schneider D."/>
            <person name="Tourret J."/>
            <person name="Vacherie B."/>
            <person name="Vallenet D."/>
            <person name="Medigue C."/>
            <person name="Rocha E.P.C."/>
            <person name="Denamur E."/>
        </authorList>
    </citation>
    <scope>NUCLEOTIDE SEQUENCE [LARGE SCALE GENOMIC DNA]</scope>
    <source>
        <strain>55989 / EAEC</strain>
    </source>
</reference>
<organism>
    <name type="scientific">Escherichia coli (strain 55989 / EAEC)</name>
    <dbReference type="NCBI Taxonomy" id="585055"/>
    <lineage>
        <taxon>Bacteria</taxon>
        <taxon>Pseudomonadati</taxon>
        <taxon>Pseudomonadota</taxon>
        <taxon>Gammaproteobacteria</taxon>
        <taxon>Enterobacterales</taxon>
        <taxon>Enterobacteriaceae</taxon>
        <taxon>Escherichia</taxon>
    </lineage>
</organism>